<reference key="1">
    <citation type="journal article" date="2001" name="DNA Res.">
        <title>Complete genomic sequence of the filamentous nitrogen-fixing cyanobacterium Anabaena sp. strain PCC 7120.</title>
        <authorList>
            <person name="Kaneko T."/>
            <person name="Nakamura Y."/>
            <person name="Wolk C.P."/>
            <person name="Kuritz T."/>
            <person name="Sasamoto S."/>
            <person name="Watanabe A."/>
            <person name="Iriguchi M."/>
            <person name="Ishikawa A."/>
            <person name="Kawashima K."/>
            <person name="Kimura T."/>
            <person name="Kishida Y."/>
            <person name="Kohara M."/>
            <person name="Matsumoto M."/>
            <person name="Matsuno A."/>
            <person name="Muraki A."/>
            <person name="Nakazaki N."/>
            <person name="Shimpo S."/>
            <person name="Sugimoto M."/>
            <person name="Takazawa M."/>
            <person name="Yamada M."/>
            <person name="Yasuda M."/>
            <person name="Tabata S."/>
        </authorList>
    </citation>
    <scope>NUCLEOTIDE SEQUENCE [LARGE SCALE GENOMIC DNA]</scope>
    <source>
        <strain>PCC 7120 / SAG 25.82 / UTEX 2576</strain>
    </source>
</reference>
<keyword id="KW-0249">Electron transport</keyword>
<keyword id="KW-0408">Iron</keyword>
<keyword id="KW-0479">Metal-binding</keyword>
<keyword id="KW-0560">Oxidoreductase</keyword>
<keyword id="KW-1185">Reference proteome</keyword>
<keyword id="KW-0813">Transport</keyword>
<evidence type="ECO:0000250" key="1"/>
<evidence type="ECO:0000255" key="2">
    <source>
        <dbReference type="PROSITE-ProRule" id="PRU00088"/>
    </source>
</evidence>
<evidence type="ECO:0000305" key="3"/>
<comment type="function">
    <text evidence="1">Mediates electron transfer from NADH to oxygen, reducing it to water. This modular protein has 3 redox cofactors, in other organisms the same activity requires 2 or 3 proteins (By similarity).</text>
</comment>
<comment type="cofactor">
    <cofactor>
        <name>Fe cation</name>
        <dbReference type="ChEBI" id="CHEBI:24875"/>
    </cofactor>
    <text>Binds 2 iron ions per subunit.</text>
</comment>
<comment type="miscellaneous">
    <text evidence="1">By homology with NorV in E.coli, could be involved in nitric oxide detoxification.</text>
</comment>
<comment type="similarity">
    <text evidence="3">In the N-terminal section; belongs to the zinc metallo-hydrolase group 3 family.</text>
</comment>
<comment type="similarity">
    <text evidence="3">In the C-terminal section; belongs to the flavodoxin reductase family.</text>
</comment>
<name>DFA2_NOSS1</name>
<sequence>MVSMSTTGNAHTENVQHRLTVETVEIAPNTTAIRCLDWDRDRFDIEFGLQNGTTYNSYLIRGEQTVLVDTSHQKFRQLYLETLKGLINPKAIDYIIVSHTEPDHSGLVEDVLQLAPRATVLASKIALQFLEGLVHDPFSKRIVKSGDRIDIGKGHEIEFVSAPNLHWPDTIFSYDRKTEVIYTCDAFGMHFCDNRTFDEDLEAIEADFRFYYDCLMGPNARSLLNAMKRMGDLGKIKIIANGHGPLLYHHLDVLTECYQSWSQRQAKSETTVGLFYVADYGYSNLLVQAIGEGIQKTGVAVEMIDLSTAEIQEIQELAGRAAGLIIGMPPTTSVAAQAGISSLLSVVKDKQAVGLFECFGGDDEPVDTIRRKFIDLGVKEAFPAIRIKDVPGASAYQLCTEAGTDLGQLLTRERNIKQIKSLDVNMEKALGRISNGLYIVTTKKGDVSSAMLASWVSQASLQPLGFTIAVAKDRAIDSLMQVGDRFVLNVLEEGNYQELKKQFLKRLHPGADRFAGVRTQTAKNGSPILTDALAYMECEIQSSLECSDHYILYCTVEDGRVSKPDGLTAVRHRKVGNYY</sequence>
<dbReference type="EC" id="1.-.-.-"/>
<dbReference type="EMBL" id="BA000019">
    <property type="protein sequence ID" value="BAB77702.1"/>
    <property type="molecule type" value="Genomic_DNA"/>
</dbReference>
<dbReference type="PIR" id="AB1829">
    <property type="entry name" value="AB1829"/>
</dbReference>
<dbReference type="RefSeq" id="WP_010994355.1">
    <property type="nucleotide sequence ID" value="NZ_RSCN01000026.1"/>
</dbReference>
<dbReference type="SMR" id="Q8Z0C0"/>
<dbReference type="STRING" id="103690.gene:10492185"/>
<dbReference type="KEGG" id="ana:all0178"/>
<dbReference type="eggNOG" id="COG0426">
    <property type="taxonomic scope" value="Bacteria"/>
</dbReference>
<dbReference type="eggNOG" id="COG1853">
    <property type="taxonomic scope" value="Bacteria"/>
</dbReference>
<dbReference type="OrthoDB" id="9807946at2"/>
<dbReference type="Proteomes" id="UP000002483">
    <property type="component" value="Chromosome"/>
</dbReference>
<dbReference type="GO" id="GO:0010181">
    <property type="term" value="F:FMN binding"/>
    <property type="evidence" value="ECO:0007669"/>
    <property type="project" value="InterPro"/>
</dbReference>
<dbReference type="GO" id="GO:0046872">
    <property type="term" value="F:metal ion binding"/>
    <property type="evidence" value="ECO:0007669"/>
    <property type="project" value="UniProtKB-KW"/>
</dbReference>
<dbReference type="GO" id="GO:0016646">
    <property type="term" value="F:oxidoreductase activity, acting on the CH-NH group of donors, NAD or NADP as acceptor"/>
    <property type="evidence" value="ECO:0007669"/>
    <property type="project" value="UniProtKB-ARBA"/>
</dbReference>
<dbReference type="CDD" id="cd07709">
    <property type="entry name" value="flavodiiron_proteins_MBL-fold"/>
    <property type="match status" value="1"/>
</dbReference>
<dbReference type="Gene3D" id="3.40.50.360">
    <property type="match status" value="1"/>
</dbReference>
<dbReference type="Gene3D" id="2.30.110.10">
    <property type="entry name" value="Electron Transport, Fmn-binding Protein, Chain A"/>
    <property type="match status" value="1"/>
</dbReference>
<dbReference type="Gene3D" id="3.60.15.10">
    <property type="entry name" value="Ribonuclease Z/Hydroxyacylglutathione hydrolase-like"/>
    <property type="match status" value="1"/>
</dbReference>
<dbReference type="InterPro" id="IPR002563">
    <property type="entry name" value="Flavin_Rdtase-like_dom"/>
</dbReference>
<dbReference type="InterPro" id="IPR008254">
    <property type="entry name" value="Flavodoxin/NO_synth"/>
</dbReference>
<dbReference type="InterPro" id="IPR029039">
    <property type="entry name" value="Flavoprotein-like_sf"/>
</dbReference>
<dbReference type="InterPro" id="IPR001279">
    <property type="entry name" value="Metallo-B-lactamas"/>
</dbReference>
<dbReference type="InterPro" id="IPR051285">
    <property type="entry name" value="NADH_oxidoreductase_modular"/>
</dbReference>
<dbReference type="InterPro" id="IPR045761">
    <property type="entry name" value="ODP_dom"/>
</dbReference>
<dbReference type="InterPro" id="IPR036866">
    <property type="entry name" value="RibonucZ/Hydroxyglut_hydro"/>
</dbReference>
<dbReference type="InterPro" id="IPR012349">
    <property type="entry name" value="Split_barrel_FMN-bd"/>
</dbReference>
<dbReference type="PANTHER" id="PTHR32145">
    <property type="entry name" value="DIFLAVIN FLAVOPROTEIN A 2-RELATED"/>
    <property type="match status" value="1"/>
</dbReference>
<dbReference type="PANTHER" id="PTHR32145:SF11">
    <property type="entry name" value="DIFLAVIN FLAVOPROTEIN A 2-RELATED"/>
    <property type="match status" value="1"/>
</dbReference>
<dbReference type="Pfam" id="PF01613">
    <property type="entry name" value="Flavin_Reduct"/>
    <property type="match status" value="1"/>
</dbReference>
<dbReference type="Pfam" id="PF19583">
    <property type="entry name" value="ODP"/>
    <property type="match status" value="1"/>
</dbReference>
<dbReference type="SMART" id="SM00903">
    <property type="entry name" value="Flavin_Reduct"/>
    <property type="match status" value="1"/>
</dbReference>
<dbReference type="SMART" id="SM00849">
    <property type="entry name" value="Lactamase_B"/>
    <property type="match status" value="1"/>
</dbReference>
<dbReference type="SUPFAM" id="SSF52218">
    <property type="entry name" value="Flavoproteins"/>
    <property type="match status" value="1"/>
</dbReference>
<dbReference type="SUPFAM" id="SSF50475">
    <property type="entry name" value="FMN-binding split barrel"/>
    <property type="match status" value="1"/>
</dbReference>
<dbReference type="SUPFAM" id="SSF56281">
    <property type="entry name" value="Metallo-hydrolase/oxidoreductase"/>
    <property type="match status" value="1"/>
</dbReference>
<dbReference type="PROSITE" id="PS50902">
    <property type="entry name" value="FLAVODOXIN_LIKE"/>
    <property type="match status" value="1"/>
</dbReference>
<proteinExistence type="inferred from homology"/>
<gene>
    <name type="primary">dfa2</name>
    <name type="ordered locus">all0178</name>
</gene>
<protein>
    <recommendedName>
        <fullName>Putative diflavin flavoprotein A 2</fullName>
        <ecNumber>1.-.-.-</ecNumber>
    </recommendedName>
</protein>
<organism>
    <name type="scientific">Nostoc sp. (strain PCC 7120 / SAG 25.82 / UTEX 2576)</name>
    <dbReference type="NCBI Taxonomy" id="103690"/>
    <lineage>
        <taxon>Bacteria</taxon>
        <taxon>Bacillati</taxon>
        <taxon>Cyanobacteriota</taxon>
        <taxon>Cyanophyceae</taxon>
        <taxon>Nostocales</taxon>
        <taxon>Nostocaceae</taxon>
        <taxon>Nostoc</taxon>
    </lineage>
</organism>
<accession>Q8Z0C0</accession>
<feature type="chain" id="PRO_0000216794" description="Putative diflavin flavoprotein A 2">
    <location>
        <begin position="1"/>
        <end position="579"/>
    </location>
</feature>
<feature type="domain" description="Flavodoxin-like" evidence="2">
    <location>
        <begin position="272"/>
        <end position="460"/>
    </location>
</feature>
<feature type="region of interest" description="Zinc metallo-hydrolase">
    <location>
        <begin position="50"/>
        <end position="243"/>
    </location>
</feature>
<feature type="region of interest" description="Flavodoxin-reductase-like">
    <location>
        <begin position="461"/>
        <end position="579"/>
    </location>
</feature>
<feature type="binding site" evidence="1">
    <location>
        <position position="99"/>
    </location>
    <ligand>
        <name>Fe cation</name>
        <dbReference type="ChEBI" id="CHEBI:24875"/>
        <label>1</label>
    </ligand>
</feature>
<feature type="binding site" evidence="1">
    <location>
        <position position="101"/>
    </location>
    <ligand>
        <name>Fe cation</name>
        <dbReference type="ChEBI" id="CHEBI:24875"/>
        <label>1</label>
    </ligand>
</feature>
<feature type="binding site" evidence="1">
    <location>
        <position position="103"/>
    </location>
    <ligand>
        <name>Fe cation</name>
        <dbReference type="ChEBI" id="CHEBI:24875"/>
        <label>2</label>
    </ligand>
</feature>
<feature type="binding site" evidence="1">
    <location>
        <position position="166"/>
    </location>
    <ligand>
        <name>Fe cation</name>
        <dbReference type="ChEBI" id="CHEBI:24875"/>
        <label>1</label>
    </ligand>
</feature>
<feature type="binding site" evidence="1">
    <location>
        <position position="185"/>
    </location>
    <ligand>
        <name>Fe cation</name>
        <dbReference type="ChEBI" id="CHEBI:24875"/>
        <label>1</label>
    </ligand>
</feature>
<feature type="binding site" evidence="1">
    <location>
        <position position="185"/>
    </location>
    <ligand>
        <name>Fe cation</name>
        <dbReference type="ChEBI" id="CHEBI:24875"/>
        <label>2</label>
    </ligand>
</feature>
<feature type="binding site" evidence="1">
    <location>
        <position position="243"/>
    </location>
    <ligand>
        <name>Fe cation</name>
        <dbReference type="ChEBI" id="CHEBI:24875"/>
        <label>2</label>
    </ligand>
</feature>